<evidence type="ECO:0000255" key="1"/>
<evidence type="ECO:0000305" key="2"/>
<reference key="1">
    <citation type="submission" date="2000-04" db="EMBL/GenBank/DDBJ databases">
        <title>Complete nucleotide sequence of the F plasmid: its implications for organization and diversification of plasmid genomes.</title>
        <authorList>
            <person name="Shimizu H."/>
            <person name="Saitoh Y."/>
            <person name="Suda Y."/>
            <person name="Uehara K."/>
            <person name="Sampei G."/>
            <person name="Mizobuchi K."/>
        </authorList>
    </citation>
    <scope>NUCLEOTIDE SEQUENCE [LARGE SCALE GENOMIC DNA]</scope>
    <source>
        <strain>K12 / CR63</strain>
    </source>
</reference>
<organism>
    <name type="scientific">Escherichia coli (strain K12)</name>
    <dbReference type="NCBI Taxonomy" id="83333"/>
    <lineage>
        <taxon>Bacteria</taxon>
        <taxon>Pseudomonadati</taxon>
        <taxon>Pseudomonadota</taxon>
        <taxon>Gammaproteobacteria</taxon>
        <taxon>Enterobacterales</taxon>
        <taxon>Enterobacteriaceae</taxon>
        <taxon>Escherichia</taxon>
    </lineage>
</organism>
<keyword id="KW-0472">Membrane</keyword>
<keyword id="KW-0614">Plasmid</keyword>
<keyword id="KW-0812">Transmembrane</keyword>
<keyword id="KW-1133">Transmembrane helix</keyword>
<accession>Q9JMS4</accession>
<gene>
    <name type="primary">yuaP</name>
    <name type="synonym">ycgA</name>
    <name type="ordered locus">ECOK12F027</name>
</gene>
<protein>
    <recommendedName>
        <fullName>Uncharacterized membrane protein YuaP</fullName>
    </recommendedName>
</protein>
<dbReference type="EMBL" id="AP001918">
    <property type="protein sequence ID" value="BAA97897.1"/>
    <property type="molecule type" value="Genomic_DNA"/>
</dbReference>
<dbReference type="RefSeq" id="NP_061406.1">
    <property type="nucleotide sequence ID" value="NC_002483.1"/>
</dbReference>
<dbReference type="GO" id="GO:0016020">
    <property type="term" value="C:membrane"/>
    <property type="evidence" value="ECO:0007669"/>
    <property type="project" value="UniProtKB-SubCell"/>
</dbReference>
<name>YUAP_ECOLI</name>
<sequence length="89" mass="10455">MYFMTKKMLTFVQTPKEGLSFAMTTYLNLFVKLLIFLYIQNTKACLSINNVNNNSKNKLRSGVSYYIINLKMSMLFTEQIVTIYNKLIF</sequence>
<comment type="subcellular location">
    <subcellularLocation>
        <location evidence="2">Membrane</location>
        <topology evidence="2">Single-pass membrane protein</topology>
    </subcellularLocation>
</comment>
<geneLocation type="plasmid">
    <name>F</name>
</geneLocation>
<feature type="chain" id="PRO_0000267223" description="Uncharacterized membrane protein YuaP">
    <location>
        <begin position="1"/>
        <end position="89"/>
    </location>
</feature>
<feature type="transmembrane region" description="Helical" evidence="1">
    <location>
        <begin position="20"/>
        <end position="39"/>
    </location>
</feature>
<proteinExistence type="predicted"/>